<evidence type="ECO:0000255" key="1">
    <source>
        <dbReference type="HAMAP-Rule" id="MF_00175"/>
    </source>
</evidence>
<evidence type="ECO:0000255" key="2">
    <source>
        <dbReference type="PROSITE-ProRule" id="PRU01250"/>
    </source>
</evidence>
<dbReference type="EMBL" id="CP001161">
    <property type="protein sequence ID" value="ACL30824.1"/>
    <property type="molecule type" value="Genomic_DNA"/>
</dbReference>
<dbReference type="RefSeq" id="WP_009874428.1">
    <property type="nucleotide sequence ID" value="NC_011833.1"/>
</dbReference>
<dbReference type="SMR" id="B8D9Q3"/>
<dbReference type="KEGG" id="bap:BUAP5A_469"/>
<dbReference type="HOGENOM" id="CLU_014218_8_2_6"/>
<dbReference type="OrthoDB" id="9804062at2"/>
<dbReference type="Proteomes" id="UP000006904">
    <property type="component" value="Chromosome"/>
</dbReference>
<dbReference type="GO" id="GO:0009376">
    <property type="term" value="C:HslUV protease complex"/>
    <property type="evidence" value="ECO:0007669"/>
    <property type="project" value="TreeGrafter"/>
</dbReference>
<dbReference type="GO" id="GO:0005524">
    <property type="term" value="F:ATP binding"/>
    <property type="evidence" value="ECO:0007669"/>
    <property type="project" value="UniProtKB-UniRule"/>
</dbReference>
<dbReference type="GO" id="GO:0016887">
    <property type="term" value="F:ATP hydrolysis activity"/>
    <property type="evidence" value="ECO:0007669"/>
    <property type="project" value="InterPro"/>
</dbReference>
<dbReference type="GO" id="GO:0140662">
    <property type="term" value="F:ATP-dependent protein folding chaperone"/>
    <property type="evidence" value="ECO:0007669"/>
    <property type="project" value="InterPro"/>
</dbReference>
<dbReference type="GO" id="GO:0046983">
    <property type="term" value="F:protein dimerization activity"/>
    <property type="evidence" value="ECO:0007669"/>
    <property type="project" value="InterPro"/>
</dbReference>
<dbReference type="GO" id="GO:0051082">
    <property type="term" value="F:unfolded protein binding"/>
    <property type="evidence" value="ECO:0007669"/>
    <property type="project" value="UniProtKB-UniRule"/>
</dbReference>
<dbReference type="GO" id="GO:0008270">
    <property type="term" value="F:zinc ion binding"/>
    <property type="evidence" value="ECO:0007669"/>
    <property type="project" value="InterPro"/>
</dbReference>
<dbReference type="GO" id="GO:0051301">
    <property type="term" value="P:cell division"/>
    <property type="evidence" value="ECO:0007669"/>
    <property type="project" value="TreeGrafter"/>
</dbReference>
<dbReference type="GO" id="GO:0051603">
    <property type="term" value="P:proteolysis involved in protein catabolic process"/>
    <property type="evidence" value="ECO:0007669"/>
    <property type="project" value="TreeGrafter"/>
</dbReference>
<dbReference type="CDD" id="cd19497">
    <property type="entry name" value="RecA-like_ClpX"/>
    <property type="match status" value="1"/>
</dbReference>
<dbReference type="FunFam" id="1.10.8.60:FF:000002">
    <property type="entry name" value="ATP-dependent Clp protease ATP-binding subunit ClpX"/>
    <property type="match status" value="1"/>
</dbReference>
<dbReference type="FunFam" id="3.40.50.300:FF:000005">
    <property type="entry name" value="ATP-dependent Clp protease ATP-binding subunit ClpX"/>
    <property type="match status" value="1"/>
</dbReference>
<dbReference type="Gene3D" id="1.10.8.60">
    <property type="match status" value="1"/>
</dbReference>
<dbReference type="Gene3D" id="6.20.220.10">
    <property type="entry name" value="ClpX chaperone, C4-type zinc finger domain"/>
    <property type="match status" value="1"/>
</dbReference>
<dbReference type="Gene3D" id="3.40.50.300">
    <property type="entry name" value="P-loop containing nucleotide triphosphate hydrolases"/>
    <property type="match status" value="1"/>
</dbReference>
<dbReference type="HAMAP" id="MF_00175">
    <property type="entry name" value="ClpX"/>
    <property type="match status" value="1"/>
</dbReference>
<dbReference type="InterPro" id="IPR003593">
    <property type="entry name" value="AAA+_ATPase"/>
</dbReference>
<dbReference type="InterPro" id="IPR050052">
    <property type="entry name" value="ATP-dep_Clp_protease_ClpX"/>
</dbReference>
<dbReference type="InterPro" id="IPR003959">
    <property type="entry name" value="ATPase_AAA_core"/>
</dbReference>
<dbReference type="InterPro" id="IPR019489">
    <property type="entry name" value="Clp_ATPase_C"/>
</dbReference>
<dbReference type="InterPro" id="IPR004487">
    <property type="entry name" value="Clp_protease_ATP-bd_su_ClpX"/>
</dbReference>
<dbReference type="InterPro" id="IPR046425">
    <property type="entry name" value="ClpX_bact"/>
</dbReference>
<dbReference type="InterPro" id="IPR027417">
    <property type="entry name" value="P-loop_NTPase"/>
</dbReference>
<dbReference type="InterPro" id="IPR010603">
    <property type="entry name" value="Znf_CppX_C4"/>
</dbReference>
<dbReference type="InterPro" id="IPR038366">
    <property type="entry name" value="Znf_CppX_C4_sf"/>
</dbReference>
<dbReference type="NCBIfam" id="TIGR00382">
    <property type="entry name" value="clpX"/>
    <property type="match status" value="1"/>
</dbReference>
<dbReference type="NCBIfam" id="NF003745">
    <property type="entry name" value="PRK05342.1"/>
    <property type="match status" value="1"/>
</dbReference>
<dbReference type="PANTHER" id="PTHR48102:SF7">
    <property type="entry name" value="ATP-DEPENDENT CLP PROTEASE ATP-BINDING SUBUNIT CLPX-LIKE, MITOCHONDRIAL"/>
    <property type="match status" value="1"/>
</dbReference>
<dbReference type="PANTHER" id="PTHR48102">
    <property type="entry name" value="ATP-DEPENDENT CLP PROTEASE ATP-BINDING SUBUNIT CLPX-LIKE, MITOCHONDRIAL-RELATED"/>
    <property type="match status" value="1"/>
</dbReference>
<dbReference type="Pfam" id="PF07724">
    <property type="entry name" value="AAA_2"/>
    <property type="match status" value="1"/>
</dbReference>
<dbReference type="Pfam" id="PF10431">
    <property type="entry name" value="ClpB_D2-small"/>
    <property type="match status" value="1"/>
</dbReference>
<dbReference type="Pfam" id="PF06689">
    <property type="entry name" value="zf-C4_ClpX"/>
    <property type="match status" value="1"/>
</dbReference>
<dbReference type="SMART" id="SM00382">
    <property type="entry name" value="AAA"/>
    <property type="match status" value="1"/>
</dbReference>
<dbReference type="SMART" id="SM01086">
    <property type="entry name" value="ClpB_D2-small"/>
    <property type="match status" value="1"/>
</dbReference>
<dbReference type="SMART" id="SM00994">
    <property type="entry name" value="zf-C4_ClpX"/>
    <property type="match status" value="1"/>
</dbReference>
<dbReference type="SUPFAM" id="SSF57716">
    <property type="entry name" value="Glucocorticoid receptor-like (DNA-binding domain)"/>
    <property type="match status" value="1"/>
</dbReference>
<dbReference type="SUPFAM" id="SSF52540">
    <property type="entry name" value="P-loop containing nucleoside triphosphate hydrolases"/>
    <property type="match status" value="1"/>
</dbReference>
<dbReference type="PROSITE" id="PS51902">
    <property type="entry name" value="CLPX_ZB"/>
    <property type="match status" value="1"/>
</dbReference>
<name>CLPX_BUCA5</name>
<proteinExistence type="inferred from homology"/>
<sequence length="429" mass="48009">MTDKSKDNSKSLLYCSFCGKNQKEVQKLIAGPKVYICDECIRLCNDIITEETIKQNNITDTENKINYLPKPHEIKKHLDNYVIGQNYTKKVLSVAVYNHYKRLYNFNKKTDSVELGKSNILLIGPTGSGKTLLAQTLAKLLDVPFTITDATTLTEAGYVGEDVENVIQKLLQKCKYNVKKAELGIVYIDEIDKIARKSDNPSITRDVSGEGVQQALLKLIEGTLASIPPQGGRKHPQQEFLQVNTSNILFICAGAFSELSKIVSKRLDAGTEIGFKANIKEKKQKKSEDFLLKQVEPEDLIKFGLIPEFIGRLPIITILNKLTEDALVNILCKPKNALIKQYQTLFELENVKLEFNAESIQLIAKKAMNKNTGARGLRSIIEGILLNIMYELPSMVNIEKILINESVVNSNSLPKIIYGKNKSKKASGE</sequence>
<keyword id="KW-0067">ATP-binding</keyword>
<keyword id="KW-0143">Chaperone</keyword>
<keyword id="KW-0479">Metal-binding</keyword>
<keyword id="KW-0547">Nucleotide-binding</keyword>
<keyword id="KW-0862">Zinc</keyword>
<accession>B8D9Q3</accession>
<comment type="function">
    <text evidence="1">ATP-dependent specificity component of the Clp protease. It directs the protease to specific substrates. Can perform chaperone functions in the absence of ClpP.</text>
</comment>
<comment type="subunit">
    <text evidence="1">Component of the ClpX-ClpP complex. Forms a hexameric ring that, in the presence of ATP, binds to fourteen ClpP subunits assembled into a disk-like structure with a central cavity, resembling the structure of eukaryotic proteasomes.</text>
</comment>
<comment type="similarity">
    <text evidence="1">Belongs to the ClpX chaperone family.</text>
</comment>
<organism>
    <name type="scientific">Buchnera aphidicola subsp. Acyrthosiphon pisum (strain 5A)</name>
    <dbReference type="NCBI Taxonomy" id="563178"/>
    <lineage>
        <taxon>Bacteria</taxon>
        <taxon>Pseudomonadati</taxon>
        <taxon>Pseudomonadota</taxon>
        <taxon>Gammaproteobacteria</taxon>
        <taxon>Enterobacterales</taxon>
        <taxon>Erwiniaceae</taxon>
        <taxon>Buchnera</taxon>
    </lineage>
</organism>
<feature type="chain" id="PRO_1000123825" description="ATP-dependent Clp protease ATP-binding subunit ClpX">
    <location>
        <begin position="1"/>
        <end position="429"/>
    </location>
</feature>
<feature type="domain" description="ClpX-type ZB" evidence="2">
    <location>
        <begin position="2"/>
        <end position="56"/>
    </location>
</feature>
<feature type="binding site" evidence="2">
    <location>
        <position position="15"/>
    </location>
    <ligand>
        <name>Zn(2+)</name>
        <dbReference type="ChEBI" id="CHEBI:29105"/>
    </ligand>
</feature>
<feature type="binding site" evidence="2">
    <location>
        <position position="18"/>
    </location>
    <ligand>
        <name>Zn(2+)</name>
        <dbReference type="ChEBI" id="CHEBI:29105"/>
    </ligand>
</feature>
<feature type="binding site" evidence="2">
    <location>
        <position position="37"/>
    </location>
    <ligand>
        <name>Zn(2+)</name>
        <dbReference type="ChEBI" id="CHEBI:29105"/>
    </ligand>
</feature>
<feature type="binding site" evidence="2">
    <location>
        <position position="40"/>
    </location>
    <ligand>
        <name>Zn(2+)</name>
        <dbReference type="ChEBI" id="CHEBI:29105"/>
    </ligand>
</feature>
<feature type="binding site" evidence="1">
    <location>
        <begin position="125"/>
        <end position="132"/>
    </location>
    <ligand>
        <name>ATP</name>
        <dbReference type="ChEBI" id="CHEBI:30616"/>
    </ligand>
</feature>
<protein>
    <recommendedName>
        <fullName evidence="1">ATP-dependent Clp protease ATP-binding subunit ClpX</fullName>
    </recommendedName>
</protein>
<gene>
    <name evidence="1" type="primary">clpX</name>
    <name type="ordered locus">BUAP5A_469</name>
</gene>
<reference key="1">
    <citation type="journal article" date="2009" name="Science">
        <title>The dynamics and time scale of ongoing genomic erosion in symbiotic bacteria.</title>
        <authorList>
            <person name="Moran N.A."/>
            <person name="McLaughlin H.J."/>
            <person name="Sorek R."/>
        </authorList>
    </citation>
    <scope>NUCLEOTIDE SEQUENCE [LARGE SCALE GENOMIC DNA]</scope>
    <source>
        <strain>5A</strain>
    </source>
</reference>